<name>SEC13_RAT</name>
<reference key="1">
    <citation type="journal article" date="2004" name="Genome Res.">
        <title>The status, quality, and expansion of the NIH full-length cDNA project: the Mammalian Gene Collection (MGC).</title>
        <authorList>
            <consortium name="The MGC Project Team"/>
        </authorList>
    </citation>
    <scope>NUCLEOTIDE SEQUENCE [LARGE SCALE MRNA]</scope>
    <source>
        <tissue>Ovary</tissue>
    </source>
</reference>
<reference key="2">
    <citation type="journal article" date="2000" name="J. Biol. Chem.">
        <title>Mammalian homologues of yeast sec31p. An ubiquitously expressed form is localized to endoplasmic reticulum (ER) exit sites and is essential for ER-Golgi transport.</title>
        <authorList>
            <person name="Tang B.L."/>
            <person name="Zhang T."/>
            <person name="Low D.Y.H."/>
            <person name="Wong E.T."/>
            <person name="Horstmann H."/>
            <person name="Hong W."/>
        </authorList>
    </citation>
    <scope>INTERACTION WITH SEC31A</scope>
</reference>
<evidence type="ECO:0000250" key="1">
    <source>
        <dbReference type="UniProtKB" id="P55735"/>
    </source>
</evidence>
<evidence type="ECO:0000250" key="2">
    <source>
        <dbReference type="UniProtKB" id="Q9D1M0"/>
    </source>
</evidence>
<evidence type="ECO:0000269" key="3">
    <source>
    </source>
</evidence>
<evidence type="ECO:0000305" key="4"/>
<protein>
    <recommendedName>
        <fullName evidence="4">Protein SEC13 homolog</fullName>
    </recommendedName>
    <alternativeName>
        <fullName evidence="4">GATOR2 complex protein SEC13</fullName>
    </alternativeName>
    <alternativeName>
        <fullName>SEC13-like protein 1</fullName>
    </alternativeName>
</protein>
<comment type="function">
    <text evidence="1 2">Functions as a component of the nuclear pore complex (NPC) and the COPII coat. At the endoplasmic reticulum, SEC13 is involved in the biogenesis of COPII-coated vesicles (By similarity). Required for the exit of adipsin (CFD/ADN), an adipocyte-secreted protein from the endoplasmic reticulum (By similarity).</text>
</comment>
<comment type="function">
    <text evidence="1">As a component of the GATOR2 complex, functions as an activator of the amino acid-sensing branch of the mTORC1 signaling pathway. The GATOR2 complex indirectly activates mTORC1 through the inhibition of the GATOR1 subcomplex. GATOR2 probably acts as an E3 ubiquitin-protein ligase toward GATOR1. In the presence of abundant amino acids, the GATOR2 complex mediates ubiquitination of the NPRL2 core component of the GATOR1 complex, leading to GATOR1 inactivation. In the absence of amino acids, GATOR2 is inhibited, activating the GATOR1 complex. Within the GATOR2 complex, SEC13 and SEH1L are required to stabilize the complex.</text>
</comment>
<comment type="activity regulation">
    <text evidence="1">The GATOR2 complex is negatively regulated by the upstream amino acid sensors CASTOR1 and SESN2, which sequester the GATOR2 complex in absence of amino acids. In the presence of abundant amino acids, GATOR2 is released from CASTOR1 and SESN2 and activated.</text>
</comment>
<comment type="subunit">
    <text evidence="1 3">At the nuclear pore: component of the Y-shaped Nup107-160 subcomplex of the nuclear pore complex (NPC) (By similarity). The Nup107-160 subcomplex includes NUP160, NUP133, NUP107, NUP98, NUP85, NUP43, NUP37, SEH1 and SEC13 (By similarity). At the COPII coat complex: interacts with SEC31A and SEC31B (PubMed:10788476). Interacts with SEC16A (By similarity). Interacts with SEC16B (By similarity). Component of the GATOR2 subcomplex, composed of MIOS, SEC13, SEH1L, WDR24 and WDR59 (By similarity). The GATOR2 complex interacts with CASTOR1 and CASTOR2; the interaction is negatively regulated by arginine (By similarity). The GATOR2 complex interacts with SESN1, SESN2 and SESN3; the interaction is negatively regulated by amino acids (By similarity).</text>
</comment>
<comment type="subcellular location">
    <subcellularLocation>
        <location evidence="1">Cytoplasmic vesicle</location>
        <location evidence="1">COPII-coated vesicle membrane</location>
        <topology evidence="1">Peripheral membrane protein</topology>
        <orientation evidence="1">Cytoplasmic side</orientation>
    </subcellularLocation>
    <subcellularLocation>
        <location evidence="1">Endoplasmic reticulum membrane</location>
        <topology evidence="1">Peripheral membrane protein</topology>
        <orientation evidence="1">Cytoplasmic side</orientation>
    </subcellularLocation>
    <subcellularLocation>
        <location evidence="1">Nucleus</location>
        <location evidence="1">Nuclear pore complex</location>
    </subcellularLocation>
    <subcellularLocation>
        <location evidence="1">Lysosome membrane</location>
    </subcellularLocation>
    <text evidence="1">In interphase, localizes at both sides of the NPC.</text>
</comment>
<comment type="similarity">
    <text evidence="4">Belongs to the WD repeat SEC13 family.</text>
</comment>
<sequence length="322" mass="35548">MVSVINTVDTSHEDMIHDAQMDYYGTRLATCSSDRSVKIFDVRNGGQILIADLRGHEGPVWQVAWAHPMYGNILASCSYDRKVIIWKEENGTWEKTHEHSGHDSSVNSVCWAPHDYGLILACGSSDGAISLLTYTGEGQWEVKKINNAHTIGCNAVSWAPAVVPGSLIDQPSGQKPNYIKKFASGGCDNLIKLWREEEDGQWKEEQKLEAHSDWVRDVAWAPSIGLPTSTIASCSQDGRVFIWTCDDASGNMWSPKLLHKFNDVVWHVSWSITANILAVSGGDNKVTLWKESVDGQWVCISDVNKGQGSVSASITEGQQNEQ</sequence>
<feature type="initiator methionine" description="Removed" evidence="1">
    <location>
        <position position="1"/>
    </location>
</feature>
<feature type="chain" id="PRO_0000281770" description="Protein SEC13 homolog">
    <location>
        <begin position="2"/>
        <end position="322"/>
    </location>
</feature>
<feature type="repeat" description="WD 1">
    <location>
        <begin position="11"/>
        <end position="50"/>
    </location>
</feature>
<feature type="repeat" description="WD 2">
    <location>
        <begin position="55"/>
        <end position="96"/>
    </location>
</feature>
<feature type="repeat" description="WD 3">
    <location>
        <begin position="101"/>
        <end position="144"/>
    </location>
</feature>
<feature type="repeat" description="WD 4">
    <location>
        <begin position="148"/>
        <end position="204"/>
    </location>
</feature>
<feature type="repeat" description="WD 5">
    <location>
        <begin position="210"/>
        <end position="253"/>
    </location>
</feature>
<feature type="repeat" description="WD 6">
    <location>
        <begin position="260"/>
        <end position="299"/>
    </location>
</feature>
<feature type="modified residue" description="N-acetylvaline" evidence="1">
    <location>
        <position position="2"/>
    </location>
</feature>
<feature type="modified residue" description="Phosphoserine" evidence="1">
    <location>
        <position position="184"/>
    </location>
</feature>
<feature type="modified residue" description="Phosphoserine" evidence="1">
    <location>
        <position position="309"/>
    </location>
</feature>
<proteinExistence type="evidence at protein level"/>
<gene>
    <name type="primary">Sec13</name>
    <name type="synonym">Sec13l1</name>
</gene>
<dbReference type="EMBL" id="BC084705">
    <property type="protein sequence ID" value="AAH84705.1"/>
    <property type="molecule type" value="mRNA"/>
</dbReference>
<dbReference type="RefSeq" id="NP_001006979.1">
    <property type="nucleotide sequence ID" value="NM_001006978.1"/>
</dbReference>
<dbReference type="SMR" id="Q5XFW8"/>
<dbReference type="BioGRID" id="255603">
    <property type="interactions" value="1"/>
</dbReference>
<dbReference type="CORUM" id="Q5XFW8"/>
<dbReference type="FunCoup" id="Q5XFW8">
    <property type="interactions" value="3832"/>
</dbReference>
<dbReference type="STRING" id="10116.ENSRNOP00000014377"/>
<dbReference type="PhosphoSitePlus" id="Q5XFW8"/>
<dbReference type="jPOST" id="Q5XFW8"/>
<dbReference type="PaxDb" id="10116-ENSRNOP00000014377"/>
<dbReference type="Ensembl" id="ENSRNOT00000114125.1">
    <property type="protein sequence ID" value="ENSRNOP00000077650.1"/>
    <property type="gene ID" value="ENSRNOG00000010628.5"/>
</dbReference>
<dbReference type="GeneID" id="297522"/>
<dbReference type="KEGG" id="rno:297522"/>
<dbReference type="UCSC" id="RGD:1359555">
    <property type="organism name" value="rat"/>
</dbReference>
<dbReference type="AGR" id="RGD:1359555"/>
<dbReference type="CTD" id="6396"/>
<dbReference type="RGD" id="1359555">
    <property type="gene designation" value="Sec13"/>
</dbReference>
<dbReference type="eggNOG" id="KOG1332">
    <property type="taxonomic scope" value="Eukaryota"/>
</dbReference>
<dbReference type="GeneTree" id="ENSGT00940000153393"/>
<dbReference type="HOGENOM" id="CLU_032441_0_1_1"/>
<dbReference type="InParanoid" id="Q5XFW8"/>
<dbReference type="OMA" id="IWKEEGD"/>
<dbReference type="OrthoDB" id="364at9989"/>
<dbReference type="PhylomeDB" id="Q5XFW8"/>
<dbReference type="TreeFam" id="TF300815"/>
<dbReference type="Reactome" id="R-RNO-141444">
    <property type="pathway name" value="Amplification of signal from unattached kinetochores via a MAD2 inhibitory signal"/>
</dbReference>
<dbReference type="Reactome" id="R-RNO-159227">
    <property type="pathway name" value="Transport of the SLBP independent Mature mRNA"/>
</dbReference>
<dbReference type="Reactome" id="R-RNO-159230">
    <property type="pathway name" value="Transport of the SLBP Dependant Mature mRNA"/>
</dbReference>
<dbReference type="Reactome" id="R-RNO-159231">
    <property type="pathway name" value="Transport of Mature mRNA Derived from an Intronless Transcript"/>
</dbReference>
<dbReference type="Reactome" id="R-RNO-159236">
    <property type="pathway name" value="Transport of Mature mRNA derived from an Intron-Containing Transcript"/>
</dbReference>
<dbReference type="Reactome" id="R-RNO-170822">
    <property type="pathway name" value="Regulation of Glucokinase by Glucokinase Regulatory Protein"/>
</dbReference>
<dbReference type="Reactome" id="R-RNO-191859">
    <property type="pathway name" value="snRNP Assembly"/>
</dbReference>
<dbReference type="Reactome" id="R-RNO-204005">
    <property type="pathway name" value="COPII-mediated vesicle transport"/>
</dbReference>
<dbReference type="Reactome" id="R-RNO-2132295">
    <property type="pathway name" value="MHC class II antigen presentation"/>
</dbReference>
<dbReference type="Reactome" id="R-RNO-2467813">
    <property type="pathway name" value="Separation of Sister Chromatids"/>
</dbReference>
<dbReference type="Reactome" id="R-RNO-2500257">
    <property type="pathway name" value="Resolution of Sister Chromatid Cohesion"/>
</dbReference>
<dbReference type="Reactome" id="R-RNO-3108214">
    <property type="pathway name" value="SUMOylation of DNA damage response and repair proteins"/>
</dbReference>
<dbReference type="Reactome" id="R-RNO-3232142">
    <property type="pathway name" value="SUMOylation of ubiquitinylation proteins"/>
</dbReference>
<dbReference type="Reactome" id="R-RNO-3301854">
    <property type="pathway name" value="Nuclear Pore Complex (NPC) Disassembly"/>
</dbReference>
<dbReference type="Reactome" id="R-RNO-3371453">
    <property type="pathway name" value="Regulation of HSF1-mediated heat shock response"/>
</dbReference>
<dbReference type="Reactome" id="R-RNO-4085377">
    <property type="pathway name" value="SUMOylation of SUMOylation proteins"/>
</dbReference>
<dbReference type="Reactome" id="R-RNO-4551638">
    <property type="pathway name" value="SUMOylation of chromatin organization proteins"/>
</dbReference>
<dbReference type="Reactome" id="R-RNO-4570464">
    <property type="pathway name" value="SUMOylation of RNA binding proteins"/>
</dbReference>
<dbReference type="Reactome" id="R-RNO-5578749">
    <property type="pathway name" value="Transcriptional regulation by small RNAs"/>
</dbReference>
<dbReference type="Reactome" id="R-RNO-5663220">
    <property type="pathway name" value="RHO GTPases Activate Formins"/>
</dbReference>
<dbReference type="Reactome" id="R-RNO-68877">
    <property type="pathway name" value="Mitotic Prometaphase"/>
</dbReference>
<dbReference type="Reactome" id="R-RNO-9615933">
    <property type="pathway name" value="Postmitotic nuclear pore complex (NPC) reformation"/>
</dbReference>
<dbReference type="Reactome" id="R-RNO-9639288">
    <property type="pathway name" value="Amino acids regulate mTORC1"/>
</dbReference>
<dbReference type="Reactome" id="R-RNO-9648025">
    <property type="pathway name" value="EML4 and NUDC in mitotic spindle formation"/>
</dbReference>
<dbReference type="Reactome" id="R-RNO-983170">
    <property type="pathway name" value="Antigen Presentation: Folding, assembly and peptide loading of class I MHC"/>
</dbReference>
<dbReference type="PRO" id="PR:Q5XFW8"/>
<dbReference type="Proteomes" id="UP000002494">
    <property type="component" value="Chromosome 4"/>
</dbReference>
<dbReference type="Bgee" id="ENSRNOG00000010628">
    <property type="expression patterns" value="Expressed in jejunum and 19 other cell types or tissues"/>
</dbReference>
<dbReference type="GO" id="GO:0030127">
    <property type="term" value="C:COPII vesicle coat"/>
    <property type="evidence" value="ECO:0000266"/>
    <property type="project" value="RGD"/>
</dbReference>
<dbReference type="GO" id="GO:0005789">
    <property type="term" value="C:endoplasmic reticulum membrane"/>
    <property type="evidence" value="ECO:0007669"/>
    <property type="project" value="UniProtKB-SubCell"/>
</dbReference>
<dbReference type="GO" id="GO:0061700">
    <property type="term" value="C:GATOR2 complex"/>
    <property type="evidence" value="ECO:0000250"/>
    <property type="project" value="UniProtKB"/>
</dbReference>
<dbReference type="GO" id="GO:0000776">
    <property type="term" value="C:kinetochore"/>
    <property type="evidence" value="ECO:0000266"/>
    <property type="project" value="RGD"/>
</dbReference>
<dbReference type="GO" id="GO:0005765">
    <property type="term" value="C:lysosomal membrane"/>
    <property type="evidence" value="ECO:0000250"/>
    <property type="project" value="UniProtKB"/>
</dbReference>
<dbReference type="GO" id="GO:0005635">
    <property type="term" value="C:nuclear envelope"/>
    <property type="evidence" value="ECO:0000266"/>
    <property type="project" value="RGD"/>
</dbReference>
<dbReference type="GO" id="GO:0005643">
    <property type="term" value="C:nuclear pore"/>
    <property type="evidence" value="ECO:0000314"/>
    <property type="project" value="RGD"/>
</dbReference>
<dbReference type="GO" id="GO:0031080">
    <property type="term" value="C:nuclear pore outer ring"/>
    <property type="evidence" value="ECO:0000250"/>
    <property type="project" value="UniProtKB"/>
</dbReference>
<dbReference type="GO" id="GO:0032991">
    <property type="term" value="C:protein-containing complex"/>
    <property type="evidence" value="ECO:0000314"/>
    <property type="project" value="RGD"/>
</dbReference>
<dbReference type="GO" id="GO:0042802">
    <property type="term" value="F:identical protein binding"/>
    <property type="evidence" value="ECO:0000266"/>
    <property type="project" value="RGD"/>
</dbReference>
<dbReference type="GO" id="GO:0005198">
    <property type="term" value="F:structural molecule activity"/>
    <property type="evidence" value="ECO:0000318"/>
    <property type="project" value="GO_Central"/>
</dbReference>
<dbReference type="GO" id="GO:0031669">
    <property type="term" value="P:cellular response to nutrient levels"/>
    <property type="evidence" value="ECO:0000250"/>
    <property type="project" value="UniProtKB"/>
</dbReference>
<dbReference type="GO" id="GO:0090114">
    <property type="term" value="P:COPII-coated vesicle budding"/>
    <property type="evidence" value="ECO:0000318"/>
    <property type="project" value="GO_Central"/>
</dbReference>
<dbReference type="GO" id="GO:0090110">
    <property type="term" value="P:COPII-coated vesicle cargo loading"/>
    <property type="evidence" value="ECO:0000266"/>
    <property type="project" value="RGD"/>
</dbReference>
<dbReference type="GO" id="GO:0006888">
    <property type="term" value="P:endoplasmic reticulum to Golgi vesicle-mediated transport"/>
    <property type="evidence" value="ECO:0000314"/>
    <property type="project" value="MGI"/>
</dbReference>
<dbReference type="GO" id="GO:0051028">
    <property type="term" value="P:mRNA transport"/>
    <property type="evidence" value="ECO:0007669"/>
    <property type="project" value="UniProtKB-KW"/>
</dbReference>
<dbReference type="GO" id="GO:0032008">
    <property type="term" value="P:positive regulation of TOR signaling"/>
    <property type="evidence" value="ECO:0000318"/>
    <property type="project" value="GO_Central"/>
</dbReference>
<dbReference type="GO" id="GO:1904263">
    <property type="term" value="P:positive regulation of TORC1 signaling"/>
    <property type="evidence" value="ECO:0000250"/>
    <property type="project" value="UniProtKB"/>
</dbReference>
<dbReference type="GO" id="GO:0032527">
    <property type="term" value="P:protein exit from endoplasmic reticulum"/>
    <property type="evidence" value="ECO:0000250"/>
    <property type="project" value="UniProtKB"/>
</dbReference>
<dbReference type="GO" id="GO:0006606">
    <property type="term" value="P:protein import into nucleus"/>
    <property type="evidence" value="ECO:0000318"/>
    <property type="project" value="GO_Central"/>
</dbReference>
<dbReference type="GO" id="GO:0072659">
    <property type="term" value="P:protein localization to plasma membrane"/>
    <property type="evidence" value="ECO:0000250"/>
    <property type="project" value="UniProtKB"/>
</dbReference>
<dbReference type="FunFam" id="2.130.10.10:FF:000017">
    <property type="entry name" value="SEC13 homolog (S. cerevisiae)"/>
    <property type="match status" value="1"/>
</dbReference>
<dbReference type="Gene3D" id="2.130.10.10">
    <property type="entry name" value="YVTN repeat-like/Quinoprotein amine dehydrogenase"/>
    <property type="match status" value="1"/>
</dbReference>
<dbReference type="InterPro" id="IPR037363">
    <property type="entry name" value="Sec13/Seh1_fam"/>
</dbReference>
<dbReference type="InterPro" id="IPR015943">
    <property type="entry name" value="WD40/YVTN_repeat-like_dom_sf"/>
</dbReference>
<dbReference type="InterPro" id="IPR036322">
    <property type="entry name" value="WD40_repeat_dom_sf"/>
</dbReference>
<dbReference type="InterPro" id="IPR001680">
    <property type="entry name" value="WD40_rpt"/>
</dbReference>
<dbReference type="PANTHER" id="PTHR11024">
    <property type="entry name" value="NUCLEAR PORE COMPLEX PROTEIN SEC13 / SEH1 FAMILY MEMBER"/>
    <property type="match status" value="1"/>
</dbReference>
<dbReference type="PANTHER" id="PTHR11024:SF2">
    <property type="entry name" value="PROTEIN SEC13 HOMOLOG"/>
    <property type="match status" value="1"/>
</dbReference>
<dbReference type="Pfam" id="PF00400">
    <property type="entry name" value="WD40"/>
    <property type="match status" value="5"/>
</dbReference>
<dbReference type="SMART" id="SM00320">
    <property type="entry name" value="WD40"/>
    <property type="match status" value="6"/>
</dbReference>
<dbReference type="SUPFAM" id="SSF50978">
    <property type="entry name" value="WD40 repeat-like"/>
    <property type="match status" value="1"/>
</dbReference>
<dbReference type="PROSITE" id="PS50082">
    <property type="entry name" value="WD_REPEATS_2"/>
    <property type="match status" value="3"/>
</dbReference>
<dbReference type="PROSITE" id="PS50294">
    <property type="entry name" value="WD_REPEATS_REGION"/>
    <property type="match status" value="1"/>
</dbReference>
<accession>Q5XFW8</accession>
<keyword id="KW-0007">Acetylation</keyword>
<keyword id="KW-0968">Cytoplasmic vesicle</keyword>
<keyword id="KW-0256">Endoplasmic reticulum</keyword>
<keyword id="KW-0931">ER-Golgi transport</keyword>
<keyword id="KW-0458">Lysosome</keyword>
<keyword id="KW-0472">Membrane</keyword>
<keyword id="KW-0509">mRNA transport</keyword>
<keyword id="KW-0906">Nuclear pore complex</keyword>
<keyword id="KW-0539">Nucleus</keyword>
<keyword id="KW-0597">Phosphoprotein</keyword>
<keyword id="KW-0653">Protein transport</keyword>
<keyword id="KW-1185">Reference proteome</keyword>
<keyword id="KW-0677">Repeat</keyword>
<keyword id="KW-0811">Translocation</keyword>
<keyword id="KW-0813">Transport</keyword>
<keyword id="KW-0853">WD repeat</keyword>
<organism>
    <name type="scientific">Rattus norvegicus</name>
    <name type="common">Rat</name>
    <dbReference type="NCBI Taxonomy" id="10116"/>
    <lineage>
        <taxon>Eukaryota</taxon>
        <taxon>Metazoa</taxon>
        <taxon>Chordata</taxon>
        <taxon>Craniata</taxon>
        <taxon>Vertebrata</taxon>
        <taxon>Euteleostomi</taxon>
        <taxon>Mammalia</taxon>
        <taxon>Eutheria</taxon>
        <taxon>Euarchontoglires</taxon>
        <taxon>Glires</taxon>
        <taxon>Rodentia</taxon>
        <taxon>Myomorpha</taxon>
        <taxon>Muroidea</taxon>
        <taxon>Muridae</taxon>
        <taxon>Murinae</taxon>
        <taxon>Rattus</taxon>
    </lineage>
</organism>